<organism>
    <name type="scientific">Arabidopsis thaliana</name>
    <name type="common">Mouse-ear cress</name>
    <dbReference type="NCBI Taxonomy" id="3702"/>
    <lineage>
        <taxon>Eukaryota</taxon>
        <taxon>Viridiplantae</taxon>
        <taxon>Streptophyta</taxon>
        <taxon>Embryophyta</taxon>
        <taxon>Tracheophyta</taxon>
        <taxon>Spermatophyta</taxon>
        <taxon>Magnoliopsida</taxon>
        <taxon>eudicotyledons</taxon>
        <taxon>Gunneridae</taxon>
        <taxon>Pentapetalae</taxon>
        <taxon>rosids</taxon>
        <taxon>malvids</taxon>
        <taxon>Brassicales</taxon>
        <taxon>Brassicaceae</taxon>
        <taxon>Camelineae</taxon>
        <taxon>Arabidopsis</taxon>
    </lineage>
</organism>
<protein>
    <recommendedName>
        <fullName>Aspartic proteinase A3</fullName>
        <ecNumber>3.4.23.-</ecNumber>
    </recommendedName>
</protein>
<name>APA3_ARATH</name>
<accession>Q9XEC4</accession>
<proteinExistence type="evidence at transcript level"/>
<gene>
    <name type="primary">APA3</name>
    <name type="ordered locus">At4g04460</name>
    <name type="ORF">T26N6.7</name>
</gene>
<keyword id="KW-0025">Alternative splicing</keyword>
<keyword id="KW-0064">Aspartyl protease</keyword>
<keyword id="KW-1015">Disulfide bond</keyword>
<keyword id="KW-0325">Glycoprotein</keyword>
<keyword id="KW-0378">Hydrolase</keyword>
<keyword id="KW-0645">Protease</keyword>
<keyword id="KW-1185">Reference proteome</keyword>
<keyword id="KW-0677">Repeat</keyword>
<keyword id="KW-0964">Secreted</keyword>
<keyword id="KW-0732">Signal</keyword>
<keyword id="KW-0865">Zymogen</keyword>
<feature type="signal peptide" evidence="2">
    <location>
        <begin position="1"/>
        <end position="25"/>
    </location>
</feature>
<feature type="propeptide" id="PRO_0000420629" description="Activation peptide" evidence="2">
    <location>
        <begin position="26"/>
        <end position="69"/>
    </location>
</feature>
<feature type="chain" id="PRO_0000420630" description="Aspartic proteinase A3">
    <location>
        <begin position="70"/>
        <end position="508"/>
    </location>
</feature>
<feature type="domain" description="Peptidase A1" evidence="4">
    <location>
        <begin position="87"/>
        <end position="505"/>
    </location>
</feature>
<feature type="domain" description="Saposin B-type" evidence="3">
    <location>
        <begin position="317"/>
        <end position="419"/>
    </location>
</feature>
<feature type="active site" evidence="5">
    <location>
        <position position="105"/>
    </location>
</feature>
<feature type="active site" evidence="5">
    <location>
        <position position="292"/>
    </location>
</feature>
<feature type="glycosylation site" description="N-linked (GlcNAc...) asparagine" evidence="3">
    <location>
        <position position="399"/>
    </location>
</feature>
<feature type="disulfide bond" evidence="3">
    <location>
        <begin position="118"/>
        <end position="124"/>
    </location>
</feature>
<feature type="disulfide bond" evidence="3">
    <location>
        <begin position="283"/>
        <end position="287"/>
    </location>
</feature>
<feature type="disulfide bond" evidence="3">
    <location>
        <begin position="322"/>
        <end position="413"/>
    </location>
</feature>
<feature type="disulfide bond" evidence="3">
    <location>
        <begin position="347"/>
        <end position="385"/>
    </location>
</feature>
<feature type="disulfide bond" evidence="3">
    <location>
        <begin position="353"/>
        <end position="382"/>
    </location>
</feature>
<feature type="disulfide bond" evidence="3">
    <location>
        <begin position="427"/>
        <end position="464"/>
    </location>
</feature>
<dbReference type="EC" id="3.4.23.-"/>
<dbReference type="EMBL" id="AF076243">
    <property type="protein sequence ID" value="AAD29758.1"/>
    <property type="molecule type" value="Genomic_DNA"/>
</dbReference>
<dbReference type="EMBL" id="AL161500">
    <property type="protein sequence ID" value="CAB77914.1"/>
    <property type="molecule type" value="Genomic_DNA"/>
</dbReference>
<dbReference type="EMBL" id="CP002687">
    <property type="protein sequence ID" value="AEE82390.1"/>
    <property type="molecule type" value="Genomic_DNA"/>
</dbReference>
<dbReference type="EMBL" id="AF372974">
    <property type="protein sequence ID" value="AAK50111.1"/>
    <property type="molecule type" value="mRNA"/>
</dbReference>
<dbReference type="PIR" id="D85056">
    <property type="entry name" value="D85056"/>
</dbReference>
<dbReference type="RefSeq" id="NP_192355.1">
    <molecule id="Q9XEC4-1"/>
    <property type="nucleotide sequence ID" value="NM_116684.4"/>
</dbReference>
<dbReference type="SMR" id="Q9XEC4"/>
<dbReference type="FunCoup" id="Q9XEC4">
    <property type="interactions" value="1259"/>
</dbReference>
<dbReference type="IntAct" id="Q9XEC4">
    <property type="interactions" value="1"/>
</dbReference>
<dbReference type="STRING" id="3702.Q9XEC4"/>
<dbReference type="MEROPS" id="A01.A03"/>
<dbReference type="GlyCosmos" id="Q9XEC4">
    <property type="glycosylation" value="1 site, No reported glycans"/>
</dbReference>
<dbReference type="GlyGen" id="Q9XEC4">
    <property type="glycosylation" value="1 site"/>
</dbReference>
<dbReference type="PaxDb" id="3702-AT4G04460.1"/>
<dbReference type="ProteomicsDB" id="244411">
    <molecule id="Q9XEC4-1"/>
</dbReference>
<dbReference type="EnsemblPlants" id="AT4G04460.1">
    <molecule id="Q9XEC4-1"/>
    <property type="protein sequence ID" value="AT4G04460.1"/>
    <property type="gene ID" value="AT4G04460"/>
</dbReference>
<dbReference type="GeneID" id="825776"/>
<dbReference type="Gramene" id="AT4G04460.1">
    <molecule id="Q9XEC4-1"/>
    <property type="protein sequence ID" value="AT4G04460.1"/>
    <property type="gene ID" value="AT4G04460"/>
</dbReference>
<dbReference type="KEGG" id="ath:AT4G04460"/>
<dbReference type="Araport" id="AT4G04460"/>
<dbReference type="TAIR" id="AT4G04460">
    <property type="gene designation" value="PASPA3"/>
</dbReference>
<dbReference type="eggNOG" id="KOG1339">
    <property type="taxonomic scope" value="Eukaryota"/>
</dbReference>
<dbReference type="InParanoid" id="Q9XEC4"/>
<dbReference type="PhylomeDB" id="Q9XEC4"/>
<dbReference type="PRO" id="PR:Q9XEC4"/>
<dbReference type="Proteomes" id="UP000006548">
    <property type="component" value="Chromosome 4"/>
</dbReference>
<dbReference type="ExpressionAtlas" id="Q9XEC4">
    <property type="expression patterns" value="baseline and differential"/>
</dbReference>
<dbReference type="GO" id="GO:0005576">
    <property type="term" value="C:extracellular region"/>
    <property type="evidence" value="ECO:0007669"/>
    <property type="project" value="UniProtKB-SubCell"/>
</dbReference>
<dbReference type="GO" id="GO:0004190">
    <property type="term" value="F:aspartic-type endopeptidase activity"/>
    <property type="evidence" value="ECO:0007669"/>
    <property type="project" value="UniProtKB-KW"/>
</dbReference>
<dbReference type="GO" id="GO:0006629">
    <property type="term" value="P:lipid metabolic process"/>
    <property type="evidence" value="ECO:0007669"/>
    <property type="project" value="InterPro"/>
</dbReference>
<dbReference type="GO" id="GO:0006508">
    <property type="term" value="P:proteolysis"/>
    <property type="evidence" value="ECO:0007669"/>
    <property type="project" value="UniProtKB-KW"/>
</dbReference>
<dbReference type="GO" id="GO:0046686">
    <property type="term" value="P:response to cadmium ion"/>
    <property type="evidence" value="ECO:0000270"/>
    <property type="project" value="TAIR"/>
</dbReference>
<dbReference type="CDD" id="cd06098">
    <property type="entry name" value="phytepsin"/>
    <property type="match status" value="1"/>
</dbReference>
<dbReference type="FunFam" id="2.40.70.10:FF:000009">
    <property type="entry name" value="Aspartic proteinase A1"/>
    <property type="match status" value="1"/>
</dbReference>
<dbReference type="Gene3D" id="2.40.70.10">
    <property type="entry name" value="Acid Proteases"/>
    <property type="match status" value="2"/>
</dbReference>
<dbReference type="Gene3D" id="1.10.225.10">
    <property type="entry name" value="Saposin-like"/>
    <property type="match status" value="1"/>
</dbReference>
<dbReference type="InterPro" id="IPR001461">
    <property type="entry name" value="Aspartic_peptidase_A1"/>
</dbReference>
<dbReference type="InterPro" id="IPR001969">
    <property type="entry name" value="Aspartic_peptidase_AS"/>
</dbReference>
<dbReference type="InterPro" id="IPR033121">
    <property type="entry name" value="PEPTIDASE_A1"/>
</dbReference>
<dbReference type="InterPro" id="IPR021109">
    <property type="entry name" value="Peptidase_aspartic_dom_sf"/>
</dbReference>
<dbReference type="InterPro" id="IPR033869">
    <property type="entry name" value="Phytepsin"/>
</dbReference>
<dbReference type="InterPro" id="IPR007856">
    <property type="entry name" value="SapB_1"/>
</dbReference>
<dbReference type="InterPro" id="IPR008138">
    <property type="entry name" value="SapB_2"/>
</dbReference>
<dbReference type="InterPro" id="IPR011001">
    <property type="entry name" value="Saposin-like"/>
</dbReference>
<dbReference type="InterPro" id="IPR008139">
    <property type="entry name" value="SaposinB_dom"/>
</dbReference>
<dbReference type="PANTHER" id="PTHR47966:SF38">
    <property type="entry name" value="ASPARTIC PROTEINASE A3"/>
    <property type="match status" value="1"/>
</dbReference>
<dbReference type="PANTHER" id="PTHR47966">
    <property type="entry name" value="BETA-SITE APP-CLEAVING ENZYME, ISOFORM A-RELATED"/>
    <property type="match status" value="1"/>
</dbReference>
<dbReference type="Pfam" id="PF00026">
    <property type="entry name" value="Asp"/>
    <property type="match status" value="2"/>
</dbReference>
<dbReference type="Pfam" id="PF05184">
    <property type="entry name" value="SapB_1"/>
    <property type="match status" value="1"/>
</dbReference>
<dbReference type="Pfam" id="PF03489">
    <property type="entry name" value="SapB_2"/>
    <property type="match status" value="1"/>
</dbReference>
<dbReference type="PRINTS" id="PR00792">
    <property type="entry name" value="PEPSIN"/>
</dbReference>
<dbReference type="SUPFAM" id="SSF50630">
    <property type="entry name" value="Acid proteases"/>
    <property type="match status" value="1"/>
</dbReference>
<dbReference type="SUPFAM" id="SSF47862">
    <property type="entry name" value="Saposin"/>
    <property type="match status" value="1"/>
</dbReference>
<dbReference type="PROSITE" id="PS00141">
    <property type="entry name" value="ASP_PROTEASE"/>
    <property type="match status" value="2"/>
</dbReference>
<dbReference type="PROSITE" id="PS51767">
    <property type="entry name" value="PEPTIDASE_A1"/>
    <property type="match status" value="1"/>
</dbReference>
<dbReference type="PROSITE" id="PS50015">
    <property type="entry name" value="SAP_B"/>
    <property type="match status" value="2"/>
</dbReference>
<evidence type="ECO:0000250" key="1"/>
<evidence type="ECO:0000255" key="2"/>
<evidence type="ECO:0000255" key="3">
    <source>
        <dbReference type="PROSITE-ProRule" id="PRU00415"/>
    </source>
</evidence>
<evidence type="ECO:0000255" key="4">
    <source>
        <dbReference type="PROSITE-ProRule" id="PRU01103"/>
    </source>
</evidence>
<evidence type="ECO:0000255" key="5">
    <source>
        <dbReference type="PROSITE-ProRule" id="PRU10094"/>
    </source>
</evidence>
<evidence type="ECO:0000269" key="6">
    <source>
    </source>
</evidence>
<evidence type="ECO:0000305" key="7"/>
<reference key="1">
    <citation type="journal article" date="1999" name="Nature">
        <title>Sequence and analysis of chromosome 4 of the plant Arabidopsis thaliana.</title>
        <authorList>
            <person name="Mayer K.F.X."/>
            <person name="Schueller C."/>
            <person name="Wambutt R."/>
            <person name="Murphy G."/>
            <person name="Volckaert G."/>
            <person name="Pohl T."/>
            <person name="Duesterhoeft A."/>
            <person name="Stiekema W."/>
            <person name="Entian K.-D."/>
            <person name="Terryn N."/>
            <person name="Harris B."/>
            <person name="Ansorge W."/>
            <person name="Brandt P."/>
            <person name="Grivell L.A."/>
            <person name="Rieger M."/>
            <person name="Weichselgartner M."/>
            <person name="de Simone V."/>
            <person name="Obermaier B."/>
            <person name="Mache R."/>
            <person name="Mueller M."/>
            <person name="Kreis M."/>
            <person name="Delseny M."/>
            <person name="Puigdomenech P."/>
            <person name="Watson M."/>
            <person name="Schmidtheini T."/>
            <person name="Reichert B."/>
            <person name="Portetelle D."/>
            <person name="Perez-Alonso M."/>
            <person name="Boutry M."/>
            <person name="Bancroft I."/>
            <person name="Vos P."/>
            <person name="Hoheisel J."/>
            <person name="Zimmermann W."/>
            <person name="Wedler H."/>
            <person name="Ridley P."/>
            <person name="Langham S.-A."/>
            <person name="McCullagh B."/>
            <person name="Bilham L."/>
            <person name="Robben J."/>
            <person name="van der Schueren J."/>
            <person name="Grymonprez B."/>
            <person name="Chuang Y.-J."/>
            <person name="Vandenbussche F."/>
            <person name="Braeken M."/>
            <person name="Weltjens I."/>
            <person name="Voet M."/>
            <person name="Bastiaens I."/>
            <person name="Aert R."/>
            <person name="Defoor E."/>
            <person name="Weitzenegger T."/>
            <person name="Bothe G."/>
            <person name="Ramsperger U."/>
            <person name="Hilbert H."/>
            <person name="Braun M."/>
            <person name="Holzer E."/>
            <person name="Brandt A."/>
            <person name="Peters S."/>
            <person name="van Staveren M."/>
            <person name="Dirkse W."/>
            <person name="Mooijman P."/>
            <person name="Klein Lankhorst R."/>
            <person name="Rose M."/>
            <person name="Hauf J."/>
            <person name="Koetter P."/>
            <person name="Berneiser S."/>
            <person name="Hempel S."/>
            <person name="Feldpausch M."/>
            <person name="Lamberth S."/>
            <person name="Van den Daele H."/>
            <person name="De Keyser A."/>
            <person name="Buysshaert C."/>
            <person name="Gielen J."/>
            <person name="Villarroel R."/>
            <person name="De Clercq R."/>
            <person name="van Montagu M."/>
            <person name="Rogers J."/>
            <person name="Cronin A."/>
            <person name="Quail M.A."/>
            <person name="Bray-Allen S."/>
            <person name="Clark L."/>
            <person name="Doggett J."/>
            <person name="Hall S."/>
            <person name="Kay M."/>
            <person name="Lennard N."/>
            <person name="McLay K."/>
            <person name="Mayes R."/>
            <person name="Pettett A."/>
            <person name="Rajandream M.A."/>
            <person name="Lyne M."/>
            <person name="Benes V."/>
            <person name="Rechmann S."/>
            <person name="Borkova D."/>
            <person name="Bloecker H."/>
            <person name="Scharfe M."/>
            <person name="Grimm M."/>
            <person name="Loehnert T.-H."/>
            <person name="Dose S."/>
            <person name="de Haan M."/>
            <person name="Maarse A.C."/>
            <person name="Schaefer M."/>
            <person name="Mueller-Auer S."/>
            <person name="Gabel C."/>
            <person name="Fuchs M."/>
            <person name="Fartmann B."/>
            <person name="Granderath K."/>
            <person name="Dauner D."/>
            <person name="Herzl A."/>
            <person name="Neumann S."/>
            <person name="Argiriou A."/>
            <person name="Vitale D."/>
            <person name="Liguori R."/>
            <person name="Piravandi E."/>
            <person name="Massenet O."/>
            <person name="Quigley F."/>
            <person name="Clabauld G."/>
            <person name="Muendlein A."/>
            <person name="Felber R."/>
            <person name="Schnabl S."/>
            <person name="Hiller R."/>
            <person name="Schmidt W."/>
            <person name="Lecharny A."/>
            <person name="Aubourg S."/>
            <person name="Chefdor F."/>
            <person name="Cooke R."/>
            <person name="Berger C."/>
            <person name="Monfort A."/>
            <person name="Casacuberta E."/>
            <person name="Gibbons T."/>
            <person name="Weber N."/>
            <person name="Vandenbol M."/>
            <person name="Bargues M."/>
            <person name="Terol J."/>
            <person name="Torres A."/>
            <person name="Perez-Perez A."/>
            <person name="Purnelle B."/>
            <person name="Bent E."/>
            <person name="Johnson S."/>
            <person name="Tacon D."/>
            <person name="Jesse T."/>
            <person name="Heijnen L."/>
            <person name="Schwarz S."/>
            <person name="Scholler P."/>
            <person name="Heber S."/>
            <person name="Francs P."/>
            <person name="Bielke C."/>
            <person name="Frishman D."/>
            <person name="Haase D."/>
            <person name="Lemcke K."/>
            <person name="Mewes H.-W."/>
            <person name="Stocker S."/>
            <person name="Zaccaria P."/>
            <person name="Bevan M."/>
            <person name="Wilson R.K."/>
            <person name="de la Bastide M."/>
            <person name="Habermann K."/>
            <person name="Parnell L."/>
            <person name="Dedhia N."/>
            <person name="Gnoj L."/>
            <person name="Schutz K."/>
            <person name="Huang E."/>
            <person name="Spiegel L."/>
            <person name="Sekhon M."/>
            <person name="Murray J."/>
            <person name="Sheet P."/>
            <person name="Cordes M."/>
            <person name="Abu-Threideh J."/>
            <person name="Stoneking T."/>
            <person name="Kalicki J."/>
            <person name="Graves T."/>
            <person name="Harmon G."/>
            <person name="Edwards J."/>
            <person name="Latreille P."/>
            <person name="Courtney L."/>
            <person name="Cloud J."/>
            <person name="Abbott A."/>
            <person name="Scott K."/>
            <person name="Johnson D."/>
            <person name="Minx P."/>
            <person name="Bentley D."/>
            <person name="Fulton B."/>
            <person name="Miller N."/>
            <person name="Greco T."/>
            <person name="Kemp K."/>
            <person name="Kramer J."/>
            <person name="Fulton L."/>
            <person name="Mardis E."/>
            <person name="Dante M."/>
            <person name="Pepin K."/>
            <person name="Hillier L.W."/>
            <person name="Nelson J."/>
            <person name="Spieth J."/>
            <person name="Ryan E."/>
            <person name="Andrews S."/>
            <person name="Geisel C."/>
            <person name="Layman D."/>
            <person name="Du H."/>
            <person name="Ali J."/>
            <person name="Berghoff A."/>
            <person name="Jones K."/>
            <person name="Drone K."/>
            <person name="Cotton M."/>
            <person name="Joshu C."/>
            <person name="Antonoiu B."/>
            <person name="Zidanic M."/>
            <person name="Strong C."/>
            <person name="Sun H."/>
            <person name="Lamar B."/>
            <person name="Yordan C."/>
            <person name="Ma P."/>
            <person name="Zhong J."/>
            <person name="Preston R."/>
            <person name="Vil D."/>
            <person name="Shekher M."/>
            <person name="Matero A."/>
            <person name="Shah R."/>
            <person name="Swaby I.K."/>
            <person name="O'Shaughnessy A."/>
            <person name="Rodriguez M."/>
            <person name="Hoffman J."/>
            <person name="Till S."/>
            <person name="Granat S."/>
            <person name="Shohdy N."/>
            <person name="Hasegawa A."/>
            <person name="Hameed A."/>
            <person name="Lodhi M."/>
            <person name="Johnson A."/>
            <person name="Chen E."/>
            <person name="Marra M.A."/>
            <person name="Martienssen R."/>
            <person name="McCombie W.R."/>
        </authorList>
    </citation>
    <scope>NUCLEOTIDE SEQUENCE [LARGE SCALE GENOMIC DNA]</scope>
    <source>
        <strain>cv. Columbia</strain>
    </source>
</reference>
<reference key="2">
    <citation type="journal article" date="2017" name="Plant J.">
        <title>Araport11: a complete reannotation of the Arabidopsis thaliana reference genome.</title>
        <authorList>
            <person name="Cheng C.Y."/>
            <person name="Krishnakumar V."/>
            <person name="Chan A.P."/>
            <person name="Thibaud-Nissen F."/>
            <person name="Schobel S."/>
            <person name="Town C.D."/>
        </authorList>
    </citation>
    <scope>GENOME REANNOTATION</scope>
    <source>
        <strain>cv. Columbia</strain>
    </source>
</reference>
<reference key="3">
    <citation type="journal article" date="2003" name="Science">
        <title>Empirical analysis of transcriptional activity in the Arabidopsis genome.</title>
        <authorList>
            <person name="Yamada K."/>
            <person name="Lim J."/>
            <person name="Dale J.M."/>
            <person name="Chen H."/>
            <person name="Shinn P."/>
            <person name="Palm C.J."/>
            <person name="Southwick A.M."/>
            <person name="Wu H.C."/>
            <person name="Kim C.J."/>
            <person name="Nguyen M."/>
            <person name="Pham P.K."/>
            <person name="Cheuk R.F."/>
            <person name="Karlin-Newmann G."/>
            <person name="Liu S.X."/>
            <person name="Lam B."/>
            <person name="Sakano H."/>
            <person name="Wu T."/>
            <person name="Yu G."/>
            <person name="Miranda M."/>
            <person name="Quach H.L."/>
            <person name="Tripp M."/>
            <person name="Chang C.H."/>
            <person name="Lee J.M."/>
            <person name="Toriumi M.J."/>
            <person name="Chan M.M."/>
            <person name="Tang C.C."/>
            <person name="Onodera C.S."/>
            <person name="Deng J.M."/>
            <person name="Akiyama K."/>
            <person name="Ansari Y."/>
            <person name="Arakawa T."/>
            <person name="Banh J."/>
            <person name="Banno F."/>
            <person name="Bowser L."/>
            <person name="Brooks S.Y."/>
            <person name="Carninci P."/>
            <person name="Chao Q."/>
            <person name="Choy N."/>
            <person name="Enju A."/>
            <person name="Goldsmith A.D."/>
            <person name="Gurjal M."/>
            <person name="Hansen N.F."/>
            <person name="Hayashizaki Y."/>
            <person name="Johnson-Hopson C."/>
            <person name="Hsuan V.W."/>
            <person name="Iida K."/>
            <person name="Karnes M."/>
            <person name="Khan S."/>
            <person name="Koesema E."/>
            <person name="Ishida J."/>
            <person name="Jiang P.X."/>
            <person name="Jones T."/>
            <person name="Kawai J."/>
            <person name="Kamiya A."/>
            <person name="Meyers C."/>
            <person name="Nakajima M."/>
            <person name="Narusaka M."/>
            <person name="Seki M."/>
            <person name="Sakurai T."/>
            <person name="Satou M."/>
            <person name="Tamse R."/>
            <person name="Vaysberg M."/>
            <person name="Wallender E.K."/>
            <person name="Wong C."/>
            <person name="Yamamura Y."/>
            <person name="Yuan S."/>
            <person name="Shinozaki K."/>
            <person name="Davis R.W."/>
            <person name="Theologis A."/>
            <person name="Ecker J.R."/>
        </authorList>
    </citation>
    <scope>NUCLEOTIDE SEQUENCE [LARGE SCALE MRNA]</scope>
    <source>
        <strain>cv. Columbia</strain>
    </source>
</reference>
<reference key="4">
    <citation type="journal article" date="2002" name="Eur. J. Biochem.">
        <title>The three typical aspartic proteinase genes of Arabidopsis thaliana are differentially expressed.</title>
        <authorList>
            <person name="Chen X."/>
            <person name="Pfeil J.E."/>
            <person name="Gal S."/>
        </authorList>
    </citation>
    <scope>TISSUE SPECIFICITY</scope>
</reference>
<sequence length="508" mass="55571">MGTRFQSFLLVFLLSCLILISTASCERNGDGTIRIGLKKRKLDRSNRLASQLFLKNRGSHWSPKHYFRLNDENADMVPLKNYLDAQYYGDITIGTPPQKFTVIFDTGSSNLWIPSTKCYLSVACYFHSKYKASQSSSYRKNGKPASIRYGTGAISGYFSNDDVKVGDIVVKEQEFIEATSEPGITFLLAKFDGILGLGFKEISVGNSTPVWYNMVEKGLVKEPIFSFWLNRNPKDPEGGEIVFGGVDPKHFKGEHTFVPVTHKGYWQFDMGDLQIAGKPTGYCAKGCSAIADSGTSLLTGPSTVITMINHAIGAQGIVSRECKAVVDQYGKTMLNSLLAQEDPKKVCSQIGVCAYDGTQSVSMGIQSVVDDGTSGLLNQAMCSACEMAAVWMESELTQNQTQERILAYAAELCDHIPTQNQQSAVDCGRVSSMPIVTFSIGGRSFDLTPQDYIFKIGEGVESQCTSGFTAMDIAPPRGPLWILGDIFMGPYHTVFDYGKGRVGFAKAA</sequence>
<comment type="function">
    <text evidence="1">Involved in the processing and degradation of storage proteins.</text>
</comment>
<comment type="subcellular location">
    <subcellularLocation>
        <location evidence="7">Secreted</location>
    </subcellularLocation>
</comment>
<comment type="alternative products">
    <event type="alternative splicing"/>
    <isoform>
        <id>Q9XEC4-1</id>
        <name>1</name>
        <sequence type="displayed"/>
    </isoform>
    <text>A number of isoforms are produced. According to EST sequences.</text>
</comment>
<comment type="tissue specificity">
    <text evidence="6">Expressed in petals, carpels and seed pods.</text>
</comment>
<comment type="similarity">
    <text evidence="7">Belongs to the peptidase A1 family.</text>
</comment>